<keyword id="KW-0489">Methyltransferase</keyword>
<keyword id="KW-0949">S-adenosyl-L-methionine</keyword>
<keyword id="KW-0808">Transferase</keyword>
<keyword id="KW-0819">tRNA processing</keyword>
<accession>Q02FV3</accession>
<dbReference type="EC" id="2.1.1.-" evidence="1"/>
<dbReference type="EC" id="2.1.1.35" evidence="1"/>
<dbReference type="EMBL" id="CP000438">
    <property type="protein sequence ID" value="ABJ14102.1"/>
    <property type="molecule type" value="Genomic_DNA"/>
</dbReference>
<dbReference type="RefSeq" id="WP_004365367.1">
    <property type="nucleotide sequence ID" value="NZ_CP034244.1"/>
</dbReference>
<dbReference type="SMR" id="Q02FV3"/>
<dbReference type="KEGG" id="pau:PA14_62450"/>
<dbReference type="PseudoCAP" id="PA14_62450"/>
<dbReference type="HOGENOM" id="CLU_043022_0_0_6"/>
<dbReference type="BioCyc" id="PAER208963:G1G74-5281-MONOMER"/>
<dbReference type="Proteomes" id="UP000000653">
    <property type="component" value="Chromosome"/>
</dbReference>
<dbReference type="GO" id="GO:0005829">
    <property type="term" value="C:cytosol"/>
    <property type="evidence" value="ECO:0007669"/>
    <property type="project" value="TreeGrafter"/>
</dbReference>
<dbReference type="GO" id="GO:0019843">
    <property type="term" value="F:rRNA binding"/>
    <property type="evidence" value="ECO:0007669"/>
    <property type="project" value="TreeGrafter"/>
</dbReference>
<dbReference type="GO" id="GO:0030697">
    <property type="term" value="F:tRNA (uracil(54)-C5)-methyltransferase activity, S-adenosyl methionine-dependent"/>
    <property type="evidence" value="ECO:0007669"/>
    <property type="project" value="UniProtKB-UniRule"/>
</dbReference>
<dbReference type="GO" id="GO:0000049">
    <property type="term" value="F:tRNA binding"/>
    <property type="evidence" value="ECO:0007669"/>
    <property type="project" value="TreeGrafter"/>
</dbReference>
<dbReference type="GO" id="GO:0030488">
    <property type="term" value="P:tRNA methylation"/>
    <property type="evidence" value="ECO:0007669"/>
    <property type="project" value="UniProtKB-UniRule"/>
</dbReference>
<dbReference type="CDD" id="cd02440">
    <property type="entry name" value="AdoMet_MTases"/>
    <property type="match status" value="1"/>
</dbReference>
<dbReference type="FunFam" id="2.40.50.1070:FF:000001">
    <property type="entry name" value="tRNA/tmRNA (uracil-C(5))-methyltransferase"/>
    <property type="match status" value="1"/>
</dbReference>
<dbReference type="FunFam" id="3.40.50.150:FF:000012">
    <property type="entry name" value="tRNA/tmRNA (uracil-C(5))-methyltransferase"/>
    <property type="match status" value="1"/>
</dbReference>
<dbReference type="Gene3D" id="2.40.50.1070">
    <property type="match status" value="1"/>
</dbReference>
<dbReference type="Gene3D" id="3.40.50.150">
    <property type="entry name" value="Vaccinia Virus protein VP39"/>
    <property type="match status" value="1"/>
</dbReference>
<dbReference type="HAMAP" id="MF_01011">
    <property type="entry name" value="RNA_methyltr_TrmA"/>
    <property type="match status" value="1"/>
</dbReference>
<dbReference type="InterPro" id="IPR030390">
    <property type="entry name" value="MeTrfase_TrmA_AS"/>
</dbReference>
<dbReference type="InterPro" id="IPR030391">
    <property type="entry name" value="MeTrfase_TrmA_CS"/>
</dbReference>
<dbReference type="InterPro" id="IPR029063">
    <property type="entry name" value="SAM-dependent_MTases_sf"/>
</dbReference>
<dbReference type="InterPro" id="IPR011869">
    <property type="entry name" value="TrmA_MeTrfase"/>
</dbReference>
<dbReference type="InterPro" id="IPR010280">
    <property type="entry name" value="U5_MeTrfase_fam"/>
</dbReference>
<dbReference type="NCBIfam" id="TIGR02143">
    <property type="entry name" value="trmA_only"/>
    <property type="match status" value="1"/>
</dbReference>
<dbReference type="PANTHER" id="PTHR47790">
    <property type="entry name" value="TRNA/TMRNA (URACIL-C(5))-METHYLTRANSFERASE"/>
    <property type="match status" value="1"/>
</dbReference>
<dbReference type="PANTHER" id="PTHR47790:SF2">
    <property type="entry name" value="TRNA_TMRNA (URACIL-C(5))-METHYLTRANSFERASE"/>
    <property type="match status" value="1"/>
</dbReference>
<dbReference type="Pfam" id="PF05958">
    <property type="entry name" value="tRNA_U5-meth_tr"/>
    <property type="match status" value="1"/>
</dbReference>
<dbReference type="SUPFAM" id="SSF53335">
    <property type="entry name" value="S-adenosyl-L-methionine-dependent methyltransferases"/>
    <property type="match status" value="1"/>
</dbReference>
<dbReference type="PROSITE" id="PS51687">
    <property type="entry name" value="SAM_MT_RNA_M5U"/>
    <property type="match status" value="1"/>
</dbReference>
<dbReference type="PROSITE" id="PS01230">
    <property type="entry name" value="TRMA_1"/>
    <property type="match status" value="1"/>
</dbReference>
<dbReference type="PROSITE" id="PS01231">
    <property type="entry name" value="TRMA_2"/>
    <property type="match status" value="1"/>
</dbReference>
<feature type="chain" id="PRO_0000281450" description="tRNA/tmRNA (uracil-C(5))-methyltransferase">
    <location>
        <begin position="1"/>
        <end position="363"/>
    </location>
</feature>
<feature type="active site" description="Nucleophile" evidence="1">
    <location>
        <position position="321"/>
    </location>
</feature>
<feature type="active site" description="Proton acceptor" evidence="1">
    <location>
        <position position="355"/>
    </location>
</feature>
<feature type="binding site" evidence="1">
    <location>
        <position position="187"/>
    </location>
    <ligand>
        <name>S-adenosyl-L-methionine</name>
        <dbReference type="ChEBI" id="CHEBI:59789"/>
    </ligand>
</feature>
<feature type="binding site" evidence="1">
    <location>
        <position position="215"/>
    </location>
    <ligand>
        <name>S-adenosyl-L-methionine</name>
        <dbReference type="ChEBI" id="CHEBI:59789"/>
    </ligand>
</feature>
<feature type="binding site" evidence="1">
    <location>
        <position position="220"/>
    </location>
    <ligand>
        <name>S-adenosyl-L-methionine</name>
        <dbReference type="ChEBI" id="CHEBI:59789"/>
    </ligand>
</feature>
<feature type="binding site" evidence="1">
    <location>
        <position position="236"/>
    </location>
    <ligand>
        <name>S-adenosyl-L-methionine</name>
        <dbReference type="ChEBI" id="CHEBI:59789"/>
    </ligand>
</feature>
<feature type="binding site" evidence="1">
    <location>
        <position position="296"/>
    </location>
    <ligand>
        <name>S-adenosyl-L-methionine</name>
        <dbReference type="ChEBI" id="CHEBI:59789"/>
    </ligand>
</feature>
<gene>
    <name evidence="1" type="primary">trmA</name>
    <name type="ordered locus">PA14_62450</name>
</gene>
<reference key="1">
    <citation type="journal article" date="2006" name="Genome Biol.">
        <title>Genomic analysis reveals that Pseudomonas aeruginosa virulence is combinatorial.</title>
        <authorList>
            <person name="Lee D.G."/>
            <person name="Urbach J.M."/>
            <person name="Wu G."/>
            <person name="Liberati N.T."/>
            <person name="Feinbaum R.L."/>
            <person name="Miyata S."/>
            <person name="Diggins L.T."/>
            <person name="He J."/>
            <person name="Saucier M."/>
            <person name="Deziel E."/>
            <person name="Friedman L."/>
            <person name="Li L."/>
            <person name="Grills G."/>
            <person name="Montgomery K."/>
            <person name="Kucherlapati R."/>
            <person name="Rahme L.G."/>
            <person name="Ausubel F.M."/>
        </authorList>
    </citation>
    <scope>NUCLEOTIDE SEQUENCE [LARGE SCALE GENOMIC DNA]</scope>
    <source>
        <strain>UCBPP-PA14</strain>
    </source>
</reference>
<organism>
    <name type="scientific">Pseudomonas aeruginosa (strain UCBPP-PA14)</name>
    <dbReference type="NCBI Taxonomy" id="208963"/>
    <lineage>
        <taxon>Bacteria</taxon>
        <taxon>Pseudomonadati</taxon>
        <taxon>Pseudomonadota</taxon>
        <taxon>Gammaproteobacteria</taxon>
        <taxon>Pseudomonadales</taxon>
        <taxon>Pseudomonadaceae</taxon>
        <taxon>Pseudomonas</taxon>
    </lineage>
</organism>
<proteinExistence type="inferred from homology"/>
<evidence type="ECO:0000255" key="1">
    <source>
        <dbReference type="HAMAP-Rule" id="MF_01011"/>
    </source>
</evidence>
<name>TRMA_PSEAB</name>
<sequence length="363" mass="41278">MSRPQFDPSAYAAQLEDKKSRLAGLLAPFAAPAPEIFESPREHYRLRAEFRLWRETGNEKRHYAMFEQGDKHTPILIEDFPIASRRINELMPRLKAAWADPALGFKLFQVEFLTTLAGDALITLCYHRPIDDAWRQAAEKLAAELGVNLVGRSRGKRIVVGRDYVEEELSVAGRRFRYRQPEGAFTQPNGEVNQKMLGWAYEALGQRDDDLLELYCGNGNFTLPLATRVRKVLATEISKSSVNAALANLADNAVDNVSLVRLSAEELTQALNEVRPFRRLADIDLKSYAFGNVFVDPPRAGMDPDTCELTRRFERILYISCNPETLAQNIAQLHDTHRISRCALFDQFPYTHHMESGVLLERR</sequence>
<comment type="function">
    <text evidence="1">Dual-specificity methyltransferase that catalyzes the formation of 5-methyluridine at position 54 (m5U54) in all tRNAs, and that of position 341 (m5U341) in tmRNA (transfer-mRNA).</text>
</comment>
<comment type="catalytic activity">
    <reaction evidence="1">
        <text>uridine(54) in tRNA + S-adenosyl-L-methionine = 5-methyluridine(54) in tRNA + S-adenosyl-L-homocysteine + H(+)</text>
        <dbReference type="Rhea" id="RHEA:42712"/>
        <dbReference type="Rhea" id="RHEA-COMP:10167"/>
        <dbReference type="Rhea" id="RHEA-COMP:10193"/>
        <dbReference type="ChEBI" id="CHEBI:15378"/>
        <dbReference type="ChEBI" id="CHEBI:57856"/>
        <dbReference type="ChEBI" id="CHEBI:59789"/>
        <dbReference type="ChEBI" id="CHEBI:65315"/>
        <dbReference type="ChEBI" id="CHEBI:74447"/>
        <dbReference type="EC" id="2.1.1.35"/>
    </reaction>
</comment>
<comment type="catalytic activity">
    <reaction evidence="1">
        <text>uridine(341) in tmRNA + S-adenosyl-L-methionine = 5-methyluridine(341) in tmRNA + S-adenosyl-L-homocysteine + H(+)</text>
        <dbReference type="Rhea" id="RHEA:43612"/>
        <dbReference type="Rhea" id="RHEA-COMP:10630"/>
        <dbReference type="Rhea" id="RHEA-COMP:10631"/>
        <dbReference type="ChEBI" id="CHEBI:15378"/>
        <dbReference type="ChEBI" id="CHEBI:57856"/>
        <dbReference type="ChEBI" id="CHEBI:59789"/>
        <dbReference type="ChEBI" id="CHEBI:65315"/>
        <dbReference type="ChEBI" id="CHEBI:74447"/>
    </reaction>
</comment>
<comment type="similarity">
    <text evidence="1">Belongs to the class I-like SAM-binding methyltransferase superfamily. RNA M5U methyltransferase family. TrmA subfamily.</text>
</comment>
<protein>
    <recommendedName>
        <fullName evidence="1">tRNA/tmRNA (uracil-C(5))-methyltransferase</fullName>
        <ecNumber evidence="1">2.1.1.-</ecNumber>
        <ecNumber evidence="1">2.1.1.35</ecNumber>
    </recommendedName>
    <alternativeName>
        <fullName evidence="1">tRNA (uracil(54)-C(5))-methyltransferase</fullName>
    </alternativeName>
    <alternativeName>
        <fullName evidence="1">tRNA(m5U54)-methyltransferase</fullName>
        <shortName evidence="1">RUMT</shortName>
    </alternativeName>
    <alternativeName>
        <fullName evidence="1">tmRNA (uracil(341)-C(5))-methyltransferase</fullName>
    </alternativeName>
</protein>